<evidence type="ECO:0000250" key="1">
    <source>
        <dbReference type="UniProtKB" id="P80321"/>
    </source>
</evidence>
<evidence type="ECO:0000269" key="2">
    <source>
    </source>
</evidence>
<evidence type="ECO:0000305" key="3"/>
<dbReference type="SMR" id="P83283"/>
<dbReference type="MEROPS" id="I12.001"/>
<dbReference type="GO" id="GO:0005576">
    <property type="term" value="C:extracellular region"/>
    <property type="evidence" value="ECO:0007669"/>
    <property type="project" value="InterPro"/>
</dbReference>
<dbReference type="GO" id="GO:0004867">
    <property type="term" value="F:serine-type endopeptidase inhibitor activity"/>
    <property type="evidence" value="ECO:0000314"/>
    <property type="project" value="UniProtKB"/>
</dbReference>
<dbReference type="CDD" id="cd00023">
    <property type="entry name" value="BBI"/>
    <property type="match status" value="1"/>
</dbReference>
<dbReference type="FunFam" id="2.10.69.10:FF:000001">
    <property type="entry name" value="Bowman-Birk type proteinase inhibitor"/>
    <property type="match status" value="1"/>
</dbReference>
<dbReference type="Gene3D" id="2.10.69.10">
    <property type="entry name" value="Cysteine Protease (Bromelain) Inhibitor, subunit H"/>
    <property type="match status" value="1"/>
</dbReference>
<dbReference type="InterPro" id="IPR035995">
    <property type="entry name" value="Bowman-Birk_prot_inh"/>
</dbReference>
<dbReference type="InterPro" id="IPR000877">
    <property type="entry name" value="Prot_inh_BBI"/>
</dbReference>
<dbReference type="Pfam" id="PF00228">
    <property type="entry name" value="Bowman-Birk_leg"/>
    <property type="match status" value="2"/>
</dbReference>
<dbReference type="SMART" id="SM00269">
    <property type="entry name" value="BowB"/>
    <property type="match status" value="1"/>
</dbReference>
<dbReference type="SUPFAM" id="SSF57247">
    <property type="entry name" value="Bowman-Birk inhibitor, BBI"/>
    <property type="match status" value="1"/>
</dbReference>
<dbReference type="PROSITE" id="PS00281">
    <property type="entry name" value="BOWMAN_BIRK"/>
    <property type="match status" value="1"/>
</dbReference>
<name>IBB2_AMBCE</name>
<proteinExistence type="evidence at protein level"/>
<reference evidence="3" key="1">
    <citation type="journal article" date="1997" name="Biol. Chem.">
        <title>Purification and primary structure determination of a Bowman-Birk trypsin inhibitor from Torresea cearensis seeds.</title>
        <authorList>
            <person name="Tanaka A.S."/>
            <person name="Sampaio M.U."/>
            <person name="Marangoni S."/>
            <person name="de Oliveira B."/>
            <person name="Novello J.C."/>
            <person name="Oliva M.L.V."/>
            <person name="Fink E."/>
            <person name="Sampaio C.A.M."/>
        </authorList>
    </citation>
    <scope>PROTEIN SEQUENCE</scope>
    <scope>FUNCTION</scope>
    <scope>SUBUNIT</scope>
    <source>
        <tissue>Seed</tissue>
    </source>
</reference>
<protein>
    <recommendedName>
        <fullName>Bowman-birk type proteinase inhibitor 2</fullName>
    </recommendedName>
    <alternativeName>
        <fullName>TcTI2</fullName>
    </alternativeName>
</protein>
<accession>P83283</accession>
<keyword id="KW-0903">Direct protein sequencing</keyword>
<keyword id="KW-1015">Disulfide bond</keyword>
<keyword id="KW-0646">Protease inhibitor</keyword>
<keyword id="KW-0722">Serine protease inhibitor</keyword>
<feature type="chain" id="PRO_0000105834" description="Bowman-birk type proteinase inhibitor 2">
    <location>
        <begin position="1"/>
        <end position="63"/>
    </location>
</feature>
<feature type="site" description="Reactive bond for trypsin">
    <location>
        <begin position="14"/>
        <end position="15"/>
    </location>
</feature>
<feature type="site" description="Reactive bond for chymotrypsin">
    <location>
        <begin position="41"/>
        <end position="42"/>
    </location>
</feature>
<feature type="disulfide bond" evidence="1">
    <location>
        <begin position="7"/>
        <end position="61"/>
    </location>
</feature>
<feature type="disulfide bond" evidence="1">
    <location>
        <begin position="8"/>
        <end position="23"/>
    </location>
</feature>
<feature type="disulfide bond" evidence="1">
    <location>
        <begin position="11"/>
        <end position="57"/>
    </location>
</feature>
<feature type="disulfide bond" evidence="1">
    <location>
        <begin position="13"/>
        <end position="21"/>
    </location>
</feature>
<feature type="disulfide bond" evidence="1">
    <location>
        <begin position="31"/>
        <end position="38"/>
    </location>
</feature>
<feature type="disulfide bond" evidence="1">
    <location>
        <begin position="35"/>
        <end position="50"/>
    </location>
</feature>
<feature type="disulfide bond" evidence="1">
    <location>
        <begin position="40"/>
        <end position="48"/>
    </location>
</feature>
<organism evidence="3">
    <name type="scientific">Amburana cearensis</name>
    <name type="common">Cerejeira</name>
    <name type="synonym">Torresea cearensis</name>
    <dbReference type="NCBI Taxonomy" id="149628"/>
    <lineage>
        <taxon>Eukaryota</taxon>
        <taxon>Viridiplantae</taxon>
        <taxon>Streptophyta</taxon>
        <taxon>Embryophyta</taxon>
        <taxon>Tracheophyta</taxon>
        <taxon>Spermatophyta</taxon>
        <taxon>Magnoliopsida</taxon>
        <taxon>eudicotyledons</taxon>
        <taxon>Gunneridae</taxon>
        <taxon>Pentapetalae</taxon>
        <taxon>rosids</taxon>
        <taxon>fabids</taxon>
        <taxon>Fabales</taxon>
        <taxon>Fabaceae</taxon>
        <taxon>Papilionoideae</taxon>
        <taxon>ADA clade</taxon>
        <taxon>Amburaneae</taxon>
        <taxon>Amburana</taxon>
    </lineage>
</organism>
<comment type="function">
    <text evidence="2">Inhibits trypsin, chymotrypsin, plasmin and factor XIIa. Does not inhibit factor Xa, thrombin, human plasma kallikrein, porcine pancreatic kallikrein and human urinary kallikrein.</text>
</comment>
<comment type="subunit">
    <text evidence="2">Exists as a dimer in its native form.</text>
</comment>
<comment type="similarity">
    <text evidence="3">Belongs to the Bowman-Birk serine protease inhibitor family.</text>
</comment>
<sequence>SSKWEACCDRCACTKSIPPQCHCADIRLNSCHSACESCACTHSIPAQCRCFDITDFCYKPCSG</sequence>